<name>TRNH2_ARATH</name>
<reference key="1">
    <citation type="journal article" date="2000" name="Nature">
        <title>Sequence and analysis of chromosome 1 of the plant Arabidopsis thaliana.</title>
        <authorList>
            <person name="Theologis A."/>
            <person name="Ecker J.R."/>
            <person name="Palm C.J."/>
            <person name="Federspiel N.A."/>
            <person name="Kaul S."/>
            <person name="White O."/>
            <person name="Alonso J."/>
            <person name="Altafi H."/>
            <person name="Araujo R."/>
            <person name="Bowman C.L."/>
            <person name="Brooks S.Y."/>
            <person name="Buehler E."/>
            <person name="Chan A."/>
            <person name="Chao Q."/>
            <person name="Chen H."/>
            <person name="Cheuk R.F."/>
            <person name="Chin C.W."/>
            <person name="Chung M.K."/>
            <person name="Conn L."/>
            <person name="Conway A.B."/>
            <person name="Conway A.R."/>
            <person name="Creasy T.H."/>
            <person name="Dewar K."/>
            <person name="Dunn P."/>
            <person name="Etgu P."/>
            <person name="Feldblyum T.V."/>
            <person name="Feng J.-D."/>
            <person name="Fong B."/>
            <person name="Fujii C.Y."/>
            <person name="Gill J.E."/>
            <person name="Goldsmith A.D."/>
            <person name="Haas B."/>
            <person name="Hansen N.F."/>
            <person name="Hughes B."/>
            <person name="Huizar L."/>
            <person name="Hunter J.L."/>
            <person name="Jenkins J."/>
            <person name="Johnson-Hopson C."/>
            <person name="Khan S."/>
            <person name="Khaykin E."/>
            <person name="Kim C.J."/>
            <person name="Koo H.L."/>
            <person name="Kremenetskaia I."/>
            <person name="Kurtz D.B."/>
            <person name="Kwan A."/>
            <person name="Lam B."/>
            <person name="Langin-Hooper S."/>
            <person name="Lee A."/>
            <person name="Lee J.M."/>
            <person name="Lenz C.A."/>
            <person name="Li J.H."/>
            <person name="Li Y.-P."/>
            <person name="Lin X."/>
            <person name="Liu S.X."/>
            <person name="Liu Z.A."/>
            <person name="Luros J.S."/>
            <person name="Maiti R."/>
            <person name="Marziali A."/>
            <person name="Militscher J."/>
            <person name="Miranda M."/>
            <person name="Nguyen M."/>
            <person name="Nierman W.C."/>
            <person name="Osborne B.I."/>
            <person name="Pai G."/>
            <person name="Peterson J."/>
            <person name="Pham P.K."/>
            <person name="Rizzo M."/>
            <person name="Rooney T."/>
            <person name="Rowley D."/>
            <person name="Sakano H."/>
            <person name="Salzberg S.L."/>
            <person name="Schwartz J.R."/>
            <person name="Shinn P."/>
            <person name="Southwick A.M."/>
            <person name="Sun H."/>
            <person name="Tallon L.J."/>
            <person name="Tambunga G."/>
            <person name="Toriumi M.J."/>
            <person name="Town C.D."/>
            <person name="Utterback T."/>
            <person name="Van Aken S."/>
            <person name="Vaysberg M."/>
            <person name="Vysotskaia V.S."/>
            <person name="Walker M."/>
            <person name="Wu D."/>
            <person name="Yu G."/>
            <person name="Fraser C.M."/>
            <person name="Venter J.C."/>
            <person name="Davis R.W."/>
        </authorList>
    </citation>
    <scope>NUCLEOTIDE SEQUENCE [LARGE SCALE GENOMIC DNA]</scope>
    <source>
        <strain>cv. Columbia</strain>
    </source>
</reference>
<reference key="2">
    <citation type="journal article" date="2017" name="Plant J.">
        <title>Araport11: a complete reannotation of the Arabidopsis thaliana reference genome.</title>
        <authorList>
            <person name="Cheng C.Y."/>
            <person name="Krishnakumar V."/>
            <person name="Chan A.P."/>
            <person name="Thibaud-Nissen F."/>
            <person name="Schobel S."/>
            <person name="Town C.D."/>
        </authorList>
    </citation>
    <scope>GENOME REANNOTATION</scope>
    <source>
        <strain>cv. Columbia</strain>
    </source>
</reference>
<reference key="3">
    <citation type="journal article" date="2003" name="Science">
        <title>Empirical analysis of transcriptional activity in the Arabidopsis genome.</title>
        <authorList>
            <person name="Yamada K."/>
            <person name="Lim J."/>
            <person name="Dale J.M."/>
            <person name="Chen H."/>
            <person name="Shinn P."/>
            <person name="Palm C.J."/>
            <person name="Southwick A.M."/>
            <person name="Wu H.C."/>
            <person name="Kim C.J."/>
            <person name="Nguyen M."/>
            <person name="Pham P.K."/>
            <person name="Cheuk R.F."/>
            <person name="Karlin-Newmann G."/>
            <person name="Liu S.X."/>
            <person name="Lam B."/>
            <person name="Sakano H."/>
            <person name="Wu T."/>
            <person name="Yu G."/>
            <person name="Miranda M."/>
            <person name="Quach H.L."/>
            <person name="Tripp M."/>
            <person name="Chang C.H."/>
            <person name="Lee J.M."/>
            <person name="Toriumi M.J."/>
            <person name="Chan M.M."/>
            <person name="Tang C.C."/>
            <person name="Onodera C.S."/>
            <person name="Deng J.M."/>
            <person name="Akiyama K."/>
            <person name="Ansari Y."/>
            <person name="Arakawa T."/>
            <person name="Banh J."/>
            <person name="Banno F."/>
            <person name="Bowser L."/>
            <person name="Brooks S.Y."/>
            <person name="Carninci P."/>
            <person name="Chao Q."/>
            <person name="Choy N."/>
            <person name="Enju A."/>
            <person name="Goldsmith A.D."/>
            <person name="Gurjal M."/>
            <person name="Hansen N.F."/>
            <person name="Hayashizaki Y."/>
            <person name="Johnson-Hopson C."/>
            <person name="Hsuan V.W."/>
            <person name="Iida K."/>
            <person name="Karnes M."/>
            <person name="Khan S."/>
            <person name="Koesema E."/>
            <person name="Ishida J."/>
            <person name="Jiang P.X."/>
            <person name="Jones T."/>
            <person name="Kawai J."/>
            <person name="Kamiya A."/>
            <person name="Meyers C."/>
            <person name="Nakajima M."/>
            <person name="Narusaka M."/>
            <person name="Seki M."/>
            <person name="Sakurai T."/>
            <person name="Satou M."/>
            <person name="Tamse R."/>
            <person name="Vaysberg M."/>
            <person name="Wallender E.K."/>
            <person name="Wong C."/>
            <person name="Yamamura Y."/>
            <person name="Yuan S."/>
            <person name="Shinozaki K."/>
            <person name="Davis R.W."/>
            <person name="Theologis A."/>
            <person name="Ecker J.R."/>
        </authorList>
    </citation>
    <scope>NUCLEOTIDE SEQUENCE [LARGE SCALE MRNA]</scope>
    <source>
        <strain>cv. Columbia</strain>
    </source>
</reference>
<reference key="4">
    <citation type="journal article" date="2009" name="Chem. Biol. Interact.">
        <title>The SDR (short-chain dehydrogenase/reductase and related enzymes) nomenclature initiative.</title>
        <authorList>
            <person name="Persson B."/>
            <person name="Kallberg Y."/>
            <person name="Bray J.E."/>
            <person name="Bruford E."/>
            <person name="Dellaporta S.L."/>
            <person name="Favia A.D."/>
            <person name="Duarte R.G."/>
            <person name="Joernvall H."/>
            <person name="Kavanagh K.L."/>
            <person name="Kedishvili N."/>
            <person name="Kisiela M."/>
            <person name="Maser E."/>
            <person name="Mindnich R."/>
            <person name="Orchard S."/>
            <person name="Penning T.M."/>
            <person name="Thornton J.M."/>
            <person name="Adamski J."/>
            <person name="Oppermann U."/>
        </authorList>
    </citation>
    <scope>GENE FAMILY</scope>
    <scope>NOMENCLATURE</scope>
</reference>
<comment type="similarity">
    <text evidence="3">Belongs to the short-chain dehydrogenases/reductases (SDR) family. SDR65C subfamily.</text>
</comment>
<comment type="sequence caution" evidence="3">
    <conflict type="erroneous gene model prediction">
        <sequence resource="EMBL-CDS" id="AAF79553"/>
    </conflict>
    <text>The predicted gene has been split into 2 genes: At1g07440 and At1g07450.</text>
</comment>
<keyword id="KW-0521">NADP</keyword>
<keyword id="KW-0560">Oxidoreductase</keyword>
<keyword id="KW-1185">Reference proteome</keyword>
<feature type="chain" id="PRO_0000432357" description="Tropinone reductase homolog At1g07450">
    <location>
        <begin position="1"/>
        <end position="260"/>
    </location>
</feature>
<feature type="active site" description="Proton acceptor" evidence="2">
    <location>
        <position position="159"/>
    </location>
</feature>
<feature type="binding site" evidence="1">
    <location>
        <begin position="14"/>
        <end position="38"/>
    </location>
    <ligand>
        <name>NADP(+)</name>
        <dbReference type="ChEBI" id="CHEBI:58349"/>
    </ligand>
</feature>
<feature type="binding site" evidence="1">
    <location>
        <position position="147"/>
    </location>
    <ligand>
        <name>substrate</name>
    </ligand>
</feature>
<evidence type="ECO:0000250" key="1">
    <source>
        <dbReference type="UniProtKB" id="P50162"/>
    </source>
</evidence>
<evidence type="ECO:0000255" key="2">
    <source>
        <dbReference type="PROSITE-ProRule" id="PRU10001"/>
    </source>
</evidence>
<evidence type="ECO:0000305" key="3"/>
<evidence type="ECO:0000312" key="4">
    <source>
        <dbReference type="Araport" id="AT1G07450"/>
    </source>
</evidence>
<evidence type="ECO:0000312" key="5">
    <source>
        <dbReference type="EMBL" id="AAF79553.1"/>
    </source>
</evidence>
<evidence type="ECO:0000312" key="6">
    <source>
        <dbReference type="EMBL" id="AAM13920.1"/>
    </source>
</evidence>
<gene>
    <name evidence="4" type="ordered locus">At1g07450</name>
    <name evidence="5" type="ORF">F22G5.20</name>
</gene>
<accession>Q8RX32</accession>
<accession>Q9ASX2</accession>
<accession>Q9LNW5</accession>
<sequence length="260" mass="27896">MDINRWSLQGMTALVTGGSKGIGYAIVEELVGFGARVHICDIDETLLNECLSGWHAKGFEVSGSICDVSSRPQRVQLMQTVSSLFGAKLNILINNVGKYILKPTLESTAEDFSSLMATNLESAYYISQLAHPLLKASGNGNIVFISSVTGVVSGTSTIYGVTKGALNQLARDLACEWASDNIRANSVAPWVTATSLVQKYLEDEIFAEAMFSRTPLGRACEPREVASLVTFLCLPAASYITGQTICIDGGFTVNGFSYKP</sequence>
<protein>
    <recommendedName>
        <fullName evidence="3">Tropinone reductase homolog At1g07450</fullName>
        <ecNumber evidence="3">1.1.1.-</ecNumber>
    </recommendedName>
</protein>
<dbReference type="EC" id="1.1.1.-" evidence="3"/>
<dbReference type="EMBL" id="AC022464">
    <property type="protein sequence ID" value="AAF79553.1"/>
    <property type="status" value="ALT_SEQ"/>
    <property type="molecule type" value="Genomic_DNA"/>
</dbReference>
<dbReference type="EMBL" id="CP002684">
    <property type="protein sequence ID" value="AEE28127.1"/>
    <property type="molecule type" value="Genomic_DNA"/>
</dbReference>
<dbReference type="EMBL" id="AY090925">
    <property type="protein sequence ID" value="AAM13920.1"/>
    <property type="molecule type" value="mRNA"/>
</dbReference>
<dbReference type="RefSeq" id="NP_172225.1">
    <property type="nucleotide sequence ID" value="NM_100619.3"/>
</dbReference>
<dbReference type="SMR" id="Q8RX32"/>
<dbReference type="FunCoup" id="Q8RX32">
    <property type="interactions" value="43"/>
</dbReference>
<dbReference type="IntAct" id="Q8RX32">
    <property type="interactions" value="3"/>
</dbReference>
<dbReference type="STRING" id="3702.Q8RX32"/>
<dbReference type="PaxDb" id="3702-AT1G07450.1"/>
<dbReference type="ProteomicsDB" id="234624"/>
<dbReference type="EnsemblPlants" id="AT1G07450.1">
    <property type="protein sequence ID" value="AT1G07450.1"/>
    <property type="gene ID" value="AT1G07450"/>
</dbReference>
<dbReference type="GeneID" id="837257"/>
<dbReference type="Gramene" id="AT1G07450.1">
    <property type="protein sequence ID" value="AT1G07450.1"/>
    <property type="gene ID" value="AT1G07450"/>
</dbReference>
<dbReference type="KEGG" id="ath:AT1G07450"/>
<dbReference type="Araport" id="AT1G07450"/>
<dbReference type="TAIR" id="AT1G07450"/>
<dbReference type="eggNOG" id="KOG0725">
    <property type="taxonomic scope" value="Eukaryota"/>
</dbReference>
<dbReference type="HOGENOM" id="CLU_010194_1_1_1"/>
<dbReference type="InParanoid" id="Q8RX32"/>
<dbReference type="OMA" id="PKPFIEH"/>
<dbReference type="PhylomeDB" id="Q8RX32"/>
<dbReference type="BioCyc" id="ARA:AT1G07450-MONOMER"/>
<dbReference type="PRO" id="PR:Q8RX32"/>
<dbReference type="Proteomes" id="UP000006548">
    <property type="component" value="Chromosome 1"/>
</dbReference>
<dbReference type="ExpressionAtlas" id="Q8RX32">
    <property type="expression patterns" value="baseline and differential"/>
</dbReference>
<dbReference type="GO" id="GO:0005576">
    <property type="term" value="C:extracellular region"/>
    <property type="evidence" value="ECO:0007005"/>
    <property type="project" value="TAIR"/>
</dbReference>
<dbReference type="GO" id="GO:0016491">
    <property type="term" value="F:oxidoreductase activity"/>
    <property type="evidence" value="ECO:0007669"/>
    <property type="project" value="UniProtKB-KW"/>
</dbReference>
<dbReference type="FunFam" id="3.40.50.720:FF:000084">
    <property type="entry name" value="Short-chain dehydrogenase reductase"/>
    <property type="match status" value="1"/>
</dbReference>
<dbReference type="Gene3D" id="3.40.50.720">
    <property type="entry name" value="NAD(P)-binding Rossmann-like Domain"/>
    <property type="match status" value="1"/>
</dbReference>
<dbReference type="InterPro" id="IPR036291">
    <property type="entry name" value="NAD(P)-bd_dom_sf"/>
</dbReference>
<dbReference type="InterPro" id="IPR020904">
    <property type="entry name" value="Sc_DH/Rdtase_CS"/>
</dbReference>
<dbReference type="InterPro" id="IPR002347">
    <property type="entry name" value="SDR_fam"/>
</dbReference>
<dbReference type="InterPro" id="IPR045000">
    <property type="entry name" value="TR"/>
</dbReference>
<dbReference type="PANTHER" id="PTHR42898:SF79">
    <property type="entry name" value="NAD(P)-BINDING ROSSMANN-FOLD PROTEIN"/>
    <property type="match status" value="1"/>
</dbReference>
<dbReference type="PANTHER" id="PTHR42898">
    <property type="entry name" value="TROPINONE REDUCTASE"/>
    <property type="match status" value="1"/>
</dbReference>
<dbReference type="Pfam" id="PF13561">
    <property type="entry name" value="adh_short_C2"/>
    <property type="match status" value="1"/>
</dbReference>
<dbReference type="PRINTS" id="PR00081">
    <property type="entry name" value="GDHRDH"/>
</dbReference>
<dbReference type="PRINTS" id="PR00080">
    <property type="entry name" value="SDRFAMILY"/>
</dbReference>
<dbReference type="SUPFAM" id="SSF51735">
    <property type="entry name" value="NAD(P)-binding Rossmann-fold domains"/>
    <property type="match status" value="1"/>
</dbReference>
<dbReference type="PROSITE" id="PS00061">
    <property type="entry name" value="ADH_SHORT"/>
    <property type="match status" value="1"/>
</dbReference>
<proteinExistence type="evidence at transcript level"/>
<organism evidence="6">
    <name type="scientific">Arabidopsis thaliana</name>
    <name type="common">Mouse-ear cress</name>
    <dbReference type="NCBI Taxonomy" id="3702"/>
    <lineage>
        <taxon>Eukaryota</taxon>
        <taxon>Viridiplantae</taxon>
        <taxon>Streptophyta</taxon>
        <taxon>Embryophyta</taxon>
        <taxon>Tracheophyta</taxon>
        <taxon>Spermatophyta</taxon>
        <taxon>Magnoliopsida</taxon>
        <taxon>eudicotyledons</taxon>
        <taxon>Gunneridae</taxon>
        <taxon>Pentapetalae</taxon>
        <taxon>rosids</taxon>
        <taxon>malvids</taxon>
        <taxon>Brassicales</taxon>
        <taxon>Brassicaceae</taxon>
        <taxon>Camelineae</taxon>
        <taxon>Arabidopsis</taxon>
    </lineage>
</organism>